<organism>
    <name type="scientific">Arthrobacter sp. (strain FB24)</name>
    <dbReference type="NCBI Taxonomy" id="290399"/>
    <lineage>
        <taxon>Bacteria</taxon>
        <taxon>Bacillati</taxon>
        <taxon>Actinomycetota</taxon>
        <taxon>Actinomycetes</taxon>
        <taxon>Micrococcales</taxon>
        <taxon>Micrococcaceae</taxon>
        <taxon>Arthrobacter</taxon>
    </lineage>
</organism>
<keyword id="KW-0021">Allosteric enzyme</keyword>
<keyword id="KW-0328">Glycosyltransferase</keyword>
<keyword id="KW-0342">GTP-binding</keyword>
<keyword id="KW-0460">Magnesium</keyword>
<keyword id="KW-0547">Nucleotide-binding</keyword>
<keyword id="KW-1185">Reference proteome</keyword>
<keyword id="KW-0808">Transferase</keyword>
<name>UPP_ARTS2</name>
<comment type="function">
    <text evidence="1">Catalyzes the conversion of uracil and 5-phospho-alpha-D-ribose 1-diphosphate (PRPP) to UMP and diphosphate.</text>
</comment>
<comment type="catalytic activity">
    <reaction evidence="1">
        <text>UMP + diphosphate = 5-phospho-alpha-D-ribose 1-diphosphate + uracil</text>
        <dbReference type="Rhea" id="RHEA:13017"/>
        <dbReference type="ChEBI" id="CHEBI:17568"/>
        <dbReference type="ChEBI" id="CHEBI:33019"/>
        <dbReference type="ChEBI" id="CHEBI:57865"/>
        <dbReference type="ChEBI" id="CHEBI:58017"/>
        <dbReference type="EC" id="2.4.2.9"/>
    </reaction>
</comment>
<comment type="cofactor">
    <cofactor evidence="1">
        <name>Mg(2+)</name>
        <dbReference type="ChEBI" id="CHEBI:18420"/>
    </cofactor>
    <text evidence="1">Binds 1 Mg(2+) ion per subunit. The magnesium is bound as Mg-PRPP.</text>
</comment>
<comment type="activity regulation">
    <text evidence="1">Allosterically activated by GTP.</text>
</comment>
<comment type="pathway">
    <text evidence="1">Pyrimidine metabolism; UMP biosynthesis via salvage pathway; UMP from uracil: step 1/1.</text>
</comment>
<comment type="similarity">
    <text evidence="1">Belongs to the UPRTase family.</text>
</comment>
<feature type="chain" id="PRO_1000053674" description="Uracil phosphoribosyltransferase">
    <location>
        <begin position="1"/>
        <end position="211"/>
    </location>
</feature>
<feature type="binding site" evidence="1">
    <location>
        <position position="78"/>
    </location>
    <ligand>
        <name>5-phospho-alpha-D-ribose 1-diphosphate</name>
        <dbReference type="ChEBI" id="CHEBI:58017"/>
    </ligand>
</feature>
<feature type="binding site" evidence="1">
    <location>
        <position position="103"/>
    </location>
    <ligand>
        <name>5-phospho-alpha-D-ribose 1-diphosphate</name>
        <dbReference type="ChEBI" id="CHEBI:58017"/>
    </ligand>
</feature>
<feature type="binding site" evidence="1">
    <location>
        <begin position="130"/>
        <end position="138"/>
    </location>
    <ligand>
        <name>5-phospho-alpha-D-ribose 1-diphosphate</name>
        <dbReference type="ChEBI" id="CHEBI:58017"/>
    </ligand>
</feature>
<feature type="binding site" evidence="1">
    <location>
        <position position="195"/>
    </location>
    <ligand>
        <name>uracil</name>
        <dbReference type="ChEBI" id="CHEBI:17568"/>
    </ligand>
</feature>
<feature type="binding site" evidence="1">
    <location>
        <begin position="200"/>
        <end position="202"/>
    </location>
    <ligand>
        <name>uracil</name>
        <dbReference type="ChEBI" id="CHEBI:17568"/>
    </ligand>
</feature>
<feature type="binding site" evidence="1">
    <location>
        <position position="201"/>
    </location>
    <ligand>
        <name>5-phospho-alpha-D-ribose 1-diphosphate</name>
        <dbReference type="ChEBI" id="CHEBI:58017"/>
    </ligand>
</feature>
<protein>
    <recommendedName>
        <fullName evidence="1">Uracil phosphoribosyltransferase</fullName>
        <ecNumber evidence="1">2.4.2.9</ecNumber>
    </recommendedName>
    <alternativeName>
        <fullName evidence="1">UMP pyrophosphorylase</fullName>
    </alternativeName>
    <alternativeName>
        <fullName evidence="1">UPRTase</fullName>
    </alternativeName>
</protein>
<sequence length="211" mass="22919">MRTLVVDHPLVAHKLTVLRDKNTPSPVFRQLTEELVTLLAYEATRDVRTEPVTIETPVSTTIGTAFTKPTPLVVPILRAGLGMLEGMTKLVPTAEVGFLGMARDEETLDIITYAERLPENLTDRQIFVLDPMLATGGTLREAIKFLFKRGASDVTCICLLAAPEGLAKLEEELSDANVTIVLASIDEKLNEKSYIVPGLGDAGDRLYGIAG</sequence>
<proteinExistence type="inferred from homology"/>
<accession>A0JSM6</accession>
<gene>
    <name evidence="1" type="primary">upp</name>
    <name type="ordered locus">Arth_0647</name>
</gene>
<evidence type="ECO:0000255" key="1">
    <source>
        <dbReference type="HAMAP-Rule" id="MF_01218"/>
    </source>
</evidence>
<reference key="1">
    <citation type="journal article" date="2013" name="Stand. Genomic Sci.">
        <title>Complete genome sequence of Arthrobacter sp. strain FB24.</title>
        <authorList>
            <person name="Nakatsu C.H."/>
            <person name="Barabote R."/>
            <person name="Thompson S."/>
            <person name="Bruce D."/>
            <person name="Detter C."/>
            <person name="Brettin T."/>
            <person name="Han C."/>
            <person name="Beasley F."/>
            <person name="Chen W."/>
            <person name="Konopka A."/>
            <person name="Xie G."/>
        </authorList>
    </citation>
    <scope>NUCLEOTIDE SEQUENCE [LARGE SCALE GENOMIC DNA]</scope>
    <source>
        <strain>FB24</strain>
    </source>
</reference>
<dbReference type="EC" id="2.4.2.9" evidence="1"/>
<dbReference type="EMBL" id="CP000454">
    <property type="protein sequence ID" value="ABK02046.1"/>
    <property type="molecule type" value="Genomic_DNA"/>
</dbReference>
<dbReference type="RefSeq" id="WP_011690514.1">
    <property type="nucleotide sequence ID" value="NC_008541.1"/>
</dbReference>
<dbReference type="SMR" id="A0JSM6"/>
<dbReference type="STRING" id="290399.Arth_0647"/>
<dbReference type="KEGG" id="art:Arth_0647"/>
<dbReference type="eggNOG" id="COG0035">
    <property type="taxonomic scope" value="Bacteria"/>
</dbReference>
<dbReference type="HOGENOM" id="CLU_067096_2_3_11"/>
<dbReference type="OrthoDB" id="9781675at2"/>
<dbReference type="UniPathway" id="UPA00574">
    <property type="reaction ID" value="UER00636"/>
</dbReference>
<dbReference type="Proteomes" id="UP000000754">
    <property type="component" value="Chromosome"/>
</dbReference>
<dbReference type="GO" id="GO:0005525">
    <property type="term" value="F:GTP binding"/>
    <property type="evidence" value="ECO:0007669"/>
    <property type="project" value="UniProtKB-KW"/>
</dbReference>
<dbReference type="GO" id="GO:0000287">
    <property type="term" value="F:magnesium ion binding"/>
    <property type="evidence" value="ECO:0007669"/>
    <property type="project" value="UniProtKB-UniRule"/>
</dbReference>
<dbReference type="GO" id="GO:0004845">
    <property type="term" value="F:uracil phosphoribosyltransferase activity"/>
    <property type="evidence" value="ECO:0007669"/>
    <property type="project" value="UniProtKB-UniRule"/>
</dbReference>
<dbReference type="GO" id="GO:0044206">
    <property type="term" value="P:UMP salvage"/>
    <property type="evidence" value="ECO:0007669"/>
    <property type="project" value="UniProtKB-UniRule"/>
</dbReference>
<dbReference type="GO" id="GO:0006223">
    <property type="term" value="P:uracil salvage"/>
    <property type="evidence" value="ECO:0007669"/>
    <property type="project" value="InterPro"/>
</dbReference>
<dbReference type="CDD" id="cd06223">
    <property type="entry name" value="PRTases_typeI"/>
    <property type="match status" value="1"/>
</dbReference>
<dbReference type="FunFam" id="3.40.50.2020:FF:000003">
    <property type="entry name" value="Uracil phosphoribosyltransferase"/>
    <property type="match status" value="1"/>
</dbReference>
<dbReference type="Gene3D" id="3.40.50.2020">
    <property type="match status" value="1"/>
</dbReference>
<dbReference type="HAMAP" id="MF_01218_B">
    <property type="entry name" value="Upp_B"/>
    <property type="match status" value="1"/>
</dbReference>
<dbReference type="InterPro" id="IPR000836">
    <property type="entry name" value="PRibTrfase_dom"/>
</dbReference>
<dbReference type="InterPro" id="IPR029057">
    <property type="entry name" value="PRTase-like"/>
</dbReference>
<dbReference type="InterPro" id="IPR034332">
    <property type="entry name" value="Upp_B"/>
</dbReference>
<dbReference type="InterPro" id="IPR050054">
    <property type="entry name" value="UPRTase/APRTase"/>
</dbReference>
<dbReference type="InterPro" id="IPR005765">
    <property type="entry name" value="Ura_phspho_trans"/>
</dbReference>
<dbReference type="NCBIfam" id="NF001097">
    <property type="entry name" value="PRK00129.1"/>
    <property type="match status" value="1"/>
</dbReference>
<dbReference type="NCBIfam" id="TIGR01091">
    <property type="entry name" value="upp"/>
    <property type="match status" value="1"/>
</dbReference>
<dbReference type="PANTHER" id="PTHR32315">
    <property type="entry name" value="ADENINE PHOSPHORIBOSYLTRANSFERASE"/>
    <property type="match status" value="1"/>
</dbReference>
<dbReference type="PANTHER" id="PTHR32315:SF4">
    <property type="entry name" value="URACIL PHOSPHORIBOSYLTRANSFERASE, CHLOROPLASTIC"/>
    <property type="match status" value="1"/>
</dbReference>
<dbReference type="Pfam" id="PF14681">
    <property type="entry name" value="UPRTase"/>
    <property type="match status" value="1"/>
</dbReference>
<dbReference type="SUPFAM" id="SSF53271">
    <property type="entry name" value="PRTase-like"/>
    <property type="match status" value="1"/>
</dbReference>